<comment type="function">
    <text evidence="1">Sugar transporter involved in the transport of CMP-sialic acid from the cytoplasm into the Golgi. May transport important nucleotide sugars such as CMP-Kdo (2-keto-3-deoxy-D-manno-octulosonic acid) in physiological conditions.</text>
</comment>
<comment type="subcellular location">
    <subcellularLocation>
        <location evidence="4">Golgi apparatus membrane</location>
        <topology evidence="4">Multi-pass membrane protein</topology>
    </subcellularLocation>
</comment>
<comment type="similarity">
    <text evidence="4">Belongs to the nucleotide-sugar transporter family. CMP-Sialate:CMP antiporter (TC 2.A.7.12) subfamily.</text>
</comment>
<comment type="sequence caution" evidence="4">
    <conflict type="erroneous initiation">
        <sequence resource="EMBL-CDS" id="BAG91709"/>
    </conflict>
    <text>Truncated N-terminus.</text>
</comment>
<organism>
    <name type="scientific">Oryza sativa subsp. japonica</name>
    <name type="common">Rice</name>
    <dbReference type="NCBI Taxonomy" id="39947"/>
    <lineage>
        <taxon>Eukaryota</taxon>
        <taxon>Viridiplantae</taxon>
        <taxon>Streptophyta</taxon>
        <taxon>Embryophyta</taxon>
        <taxon>Tracheophyta</taxon>
        <taxon>Spermatophyta</taxon>
        <taxon>Magnoliopsida</taxon>
        <taxon>Liliopsida</taxon>
        <taxon>Poales</taxon>
        <taxon>Poaceae</taxon>
        <taxon>BOP clade</taxon>
        <taxon>Oryzoideae</taxon>
        <taxon>Oryzeae</taxon>
        <taxon>Oryzinae</taxon>
        <taxon>Oryza</taxon>
        <taxon>Oryza sativa</taxon>
    </lineage>
</organism>
<keyword id="KW-0333">Golgi apparatus</keyword>
<keyword id="KW-0472">Membrane</keyword>
<keyword id="KW-1185">Reference proteome</keyword>
<keyword id="KW-0762">Sugar transport</keyword>
<keyword id="KW-0812">Transmembrane</keyword>
<keyword id="KW-1133">Transmembrane helix</keyword>
<keyword id="KW-0813">Transport</keyword>
<accession>Q6K8S7</accession>
<accession>A0A0P0VLP3</accession>
<accession>B7EH62</accession>
<evidence type="ECO:0000250" key="1">
    <source>
        <dbReference type="UniProtKB" id="Q654D9"/>
    </source>
</evidence>
<evidence type="ECO:0000255" key="2"/>
<evidence type="ECO:0000256" key="3">
    <source>
        <dbReference type="SAM" id="MobiDB-lite"/>
    </source>
</evidence>
<evidence type="ECO:0000305" key="4"/>
<evidence type="ECO:0000312" key="5">
    <source>
        <dbReference type="EMBL" id="BAD19315.1"/>
    </source>
</evidence>
<evidence type="ECO:0000312" key="6">
    <source>
        <dbReference type="EMBL" id="BAF09282.1"/>
    </source>
</evidence>
<reference key="1">
    <citation type="journal article" date="2005" name="Nature">
        <title>The map-based sequence of the rice genome.</title>
        <authorList>
            <consortium name="International rice genome sequencing project (IRGSP)"/>
        </authorList>
    </citation>
    <scope>NUCLEOTIDE SEQUENCE [LARGE SCALE GENOMIC DNA]</scope>
    <source>
        <strain>cv. Nipponbare</strain>
    </source>
</reference>
<reference key="2">
    <citation type="journal article" date="2008" name="Nucleic Acids Res.">
        <title>The rice annotation project database (RAP-DB): 2008 update.</title>
        <authorList>
            <consortium name="The rice annotation project (RAP)"/>
        </authorList>
    </citation>
    <scope>GENOME REANNOTATION</scope>
    <source>
        <strain>cv. Nipponbare</strain>
    </source>
</reference>
<reference key="3">
    <citation type="journal article" date="2013" name="Rice">
        <title>Improvement of the Oryza sativa Nipponbare reference genome using next generation sequence and optical map data.</title>
        <authorList>
            <person name="Kawahara Y."/>
            <person name="de la Bastide M."/>
            <person name="Hamilton J.P."/>
            <person name="Kanamori H."/>
            <person name="McCombie W.R."/>
            <person name="Ouyang S."/>
            <person name="Schwartz D.C."/>
            <person name="Tanaka T."/>
            <person name="Wu J."/>
            <person name="Zhou S."/>
            <person name="Childs K.L."/>
            <person name="Davidson R.M."/>
            <person name="Lin H."/>
            <person name="Quesada-Ocampo L."/>
            <person name="Vaillancourt B."/>
            <person name="Sakai H."/>
            <person name="Lee S.S."/>
            <person name="Kim J."/>
            <person name="Numa H."/>
            <person name="Itoh T."/>
            <person name="Buell C.R."/>
            <person name="Matsumoto T."/>
        </authorList>
    </citation>
    <scope>GENOME REANNOTATION</scope>
    <source>
        <strain>cv. Nipponbare</strain>
    </source>
</reference>
<reference key="4">
    <citation type="journal article" date="2003" name="Science">
        <title>Collection, mapping, and annotation of over 28,000 cDNA clones from japonica rice.</title>
        <authorList>
            <consortium name="The rice full-length cDNA consortium"/>
        </authorList>
    </citation>
    <scope>NUCLEOTIDE SEQUENCE [LARGE SCALE MRNA]</scope>
    <source>
        <strain>cv. Nipponbare</strain>
    </source>
</reference>
<proteinExistence type="evidence at transcript level"/>
<name>CSTR5_ORYSJ</name>
<sequence>MQRNGVVECSVCRSRLVVPSPRSVSRAYDKHRSKISSKFRALNVLLVVGDCILVGLQPILVFMSKVDGKFQFSPISVNFLTEVTKVVFAIVMLIIQSRKQKVGEKPLLARSTFIQAARNNALLAVPALLYAINNYLKFIMQLYFNPSTVKMLSNLKVLVIAVLLKFIMKRRFSVIQWEALALLLIGISINQLRTVPAGNTAFGLPVTAIAYIYTLIFVTVPSLASVYNEYALKSQYDTSIYLQNLFLYGYGAIFNFLGILGTALFQGPESFNILRGHSRATMFLICNNAAQGILSSFFFKYADTILKKYSSTVATIFTGLASAAFLGHTLTINFLLGISVVFISMHQFFSPLAKAKDDKPAELLELEDTQNHRSSESSFVNMTAGAAEDASHRIGTDERQPLLPT</sequence>
<protein>
    <recommendedName>
        <fullName evidence="4">CMP-sialic acid transporter 5</fullName>
        <shortName evidence="4">CMP-SA-Tr 5</shortName>
        <shortName evidence="4">CMP-Sia-Tr 5</shortName>
    </recommendedName>
    <alternativeName>
        <fullName evidence="4">CMP-sialic acid transporter-like protein 5</fullName>
    </alternativeName>
</protein>
<dbReference type="EMBL" id="AP004111">
    <property type="protein sequence ID" value="BAD19315.1"/>
    <property type="molecule type" value="Genomic_DNA"/>
</dbReference>
<dbReference type="EMBL" id="AP008208">
    <property type="protein sequence ID" value="BAF09282.1"/>
    <property type="molecule type" value="Genomic_DNA"/>
</dbReference>
<dbReference type="EMBL" id="AP014958">
    <property type="protein sequence ID" value="BAS79647.1"/>
    <property type="molecule type" value="Genomic_DNA"/>
</dbReference>
<dbReference type="EMBL" id="AK069982">
    <property type="protein sequence ID" value="BAG91709.1"/>
    <property type="status" value="ALT_INIT"/>
    <property type="molecule type" value="mRNA"/>
</dbReference>
<dbReference type="RefSeq" id="XP_015622898.1">
    <property type="nucleotide sequence ID" value="XM_015767412.1"/>
</dbReference>
<dbReference type="SMR" id="Q6K8S7"/>
<dbReference type="FunCoup" id="Q6K8S7">
    <property type="interactions" value="24"/>
</dbReference>
<dbReference type="STRING" id="39947.Q6K8S7"/>
<dbReference type="PaxDb" id="39947-Q6K8S7"/>
<dbReference type="EnsemblPlants" id="Os02t0604300-01">
    <property type="protein sequence ID" value="Os02t0604300-01"/>
    <property type="gene ID" value="Os02g0604300"/>
</dbReference>
<dbReference type="Gramene" id="Os02t0604300-01">
    <property type="protein sequence ID" value="Os02t0604300-01"/>
    <property type="gene ID" value="Os02g0604300"/>
</dbReference>
<dbReference type="KEGG" id="dosa:Os02g0604300"/>
<dbReference type="eggNOG" id="KOG2234">
    <property type="taxonomic scope" value="Eukaryota"/>
</dbReference>
<dbReference type="HOGENOM" id="CLU_035460_0_0_1"/>
<dbReference type="InParanoid" id="Q6K8S7"/>
<dbReference type="OMA" id="EIHRTHH"/>
<dbReference type="OrthoDB" id="419167at2759"/>
<dbReference type="Proteomes" id="UP000000763">
    <property type="component" value="Chromosome 2"/>
</dbReference>
<dbReference type="Proteomes" id="UP000059680">
    <property type="component" value="Chromosome 2"/>
</dbReference>
<dbReference type="GO" id="GO:0000139">
    <property type="term" value="C:Golgi membrane"/>
    <property type="evidence" value="ECO:0000318"/>
    <property type="project" value="GO_Central"/>
</dbReference>
<dbReference type="GO" id="GO:0015165">
    <property type="term" value="F:pyrimidine nucleotide-sugar transmembrane transporter activity"/>
    <property type="evidence" value="ECO:0007669"/>
    <property type="project" value="InterPro"/>
</dbReference>
<dbReference type="GO" id="GO:0022857">
    <property type="term" value="F:transmembrane transporter activity"/>
    <property type="evidence" value="ECO:0000318"/>
    <property type="project" value="GO_Central"/>
</dbReference>
<dbReference type="GO" id="GO:0055085">
    <property type="term" value="P:transmembrane transport"/>
    <property type="evidence" value="ECO:0000318"/>
    <property type="project" value="GO_Central"/>
</dbReference>
<dbReference type="InterPro" id="IPR007271">
    <property type="entry name" value="Nuc_sug_transpt"/>
</dbReference>
<dbReference type="PANTHER" id="PTHR10231">
    <property type="entry name" value="NUCLEOTIDE-SUGAR TRANSMEMBRANE TRANSPORTER"/>
    <property type="match status" value="1"/>
</dbReference>
<dbReference type="Pfam" id="PF04142">
    <property type="entry name" value="Nuc_sug_transp"/>
    <property type="match status" value="1"/>
</dbReference>
<dbReference type="PIRSF" id="PIRSF005799">
    <property type="entry name" value="UDP-gal_transpt"/>
    <property type="match status" value="1"/>
</dbReference>
<dbReference type="SUPFAM" id="SSF103481">
    <property type="entry name" value="Multidrug resistance efflux transporter EmrE"/>
    <property type="match status" value="1"/>
</dbReference>
<feature type="chain" id="PRO_0000434345" description="CMP-sialic acid transporter 5">
    <location>
        <begin position="1"/>
        <end position="405"/>
    </location>
</feature>
<feature type="topological domain" description="Cytoplasmic" evidence="4">
    <location>
        <begin position="1"/>
        <end position="43"/>
    </location>
</feature>
<feature type="transmembrane region" description="Helical" evidence="2">
    <location>
        <begin position="44"/>
        <end position="64"/>
    </location>
</feature>
<feature type="topological domain" description="Lumenal" evidence="4">
    <location>
        <begin position="65"/>
        <end position="74"/>
    </location>
</feature>
<feature type="transmembrane region" description="Helical" evidence="2">
    <location>
        <begin position="75"/>
        <end position="95"/>
    </location>
</feature>
<feature type="topological domain" description="Cytoplasmic" evidence="4">
    <location>
        <begin position="96"/>
        <end position="121"/>
    </location>
</feature>
<feature type="transmembrane region" description="Helical" evidence="2">
    <location>
        <begin position="122"/>
        <end position="142"/>
    </location>
</feature>
<feature type="topological domain" description="Lumenal" evidence="4">
    <location>
        <begin position="143"/>
        <end position="147"/>
    </location>
</feature>
<feature type="transmembrane region" description="Helical" evidence="2">
    <location>
        <begin position="148"/>
        <end position="168"/>
    </location>
</feature>
<feature type="topological domain" description="Cytoplasmic" evidence="4">
    <location>
        <begin position="169"/>
        <end position="171"/>
    </location>
</feature>
<feature type="transmembrane region" description="Helical" evidence="2">
    <location>
        <begin position="172"/>
        <end position="192"/>
    </location>
</feature>
<feature type="topological domain" description="Lumenal" evidence="4">
    <location>
        <begin position="193"/>
        <end position="200"/>
    </location>
</feature>
<feature type="transmembrane region" description="Helical" evidence="2">
    <location>
        <begin position="201"/>
        <end position="221"/>
    </location>
</feature>
<feature type="topological domain" description="Cytoplasmic" evidence="4">
    <location>
        <begin position="222"/>
        <end position="244"/>
    </location>
</feature>
<feature type="transmembrane region" description="Helical" evidence="2">
    <location>
        <begin position="245"/>
        <end position="265"/>
    </location>
</feature>
<feature type="topological domain" description="Lumenal" evidence="4">
    <location>
        <begin position="266"/>
        <end position="281"/>
    </location>
</feature>
<feature type="transmembrane region" description="Helical" evidence="2">
    <location>
        <begin position="282"/>
        <end position="302"/>
    </location>
</feature>
<feature type="topological domain" description="Cytoplasmic" evidence="4">
    <location>
        <begin position="303"/>
        <end position="322"/>
    </location>
</feature>
<feature type="transmembrane region" description="Helical" evidence="2">
    <location>
        <begin position="323"/>
        <end position="343"/>
    </location>
</feature>
<feature type="topological domain" description="Lumenal" evidence="4">
    <location>
        <begin position="344"/>
        <end position="405"/>
    </location>
</feature>
<feature type="region of interest" description="Disordered" evidence="3">
    <location>
        <begin position="368"/>
        <end position="405"/>
    </location>
</feature>
<feature type="compositionally biased region" description="Basic and acidic residues" evidence="3">
    <location>
        <begin position="389"/>
        <end position="405"/>
    </location>
</feature>
<gene>
    <name evidence="4" type="primary">CSTLP5</name>
    <name evidence="6" type="ordered locus">Os02g0604300</name>
    <name evidence="4" type="ordered locus">LOC_Os02g39200</name>
    <name evidence="5" type="ORF">OJ1058_F07.2</name>
</gene>